<sequence length="447" mass="50587">MATDLQVTTNKLSNKETQLTVKVPVEKIQNKVEGRIRQVAKTAKIDGFRKGNVPMSHIRSQYGAGIQQEVINDVIRDTVFEAIKSEDIRAVGMPNIDDVKLEDDFLVYQATVEIFPEIDIQGIDEIEVERHTATVNEEDVDTMIENLQKQREEFVEKKGKADKGNQVTFDFEGSIDGEKFEGGSAEDFKLVIGSNQMIPGFEAGIKGMKAGEEKTIDVTFPEDYQAENLAGKEAQFKINVKLVEKSKLPEMDDAFLELFGVKEGGVEKLKDDVRKNMEREIKNAARSQVKQATFDALLEKNEFDVPNAMLEQEIERQRNMMMQRFSQQFGANADSFDKDMLPNELFEEQALRAARLGIIVARVIDTKGLEVDQARVETFIKEAAENYEDPAEVIEYYTTDKQQRANIESVVLEDQVVDYLIGQGKVTDKEVSYQDLLAAQQQQQQAM</sequence>
<proteinExistence type="inferred from homology"/>
<accession>Q4FQC0</accession>
<name>TIG_PSYA2</name>
<comment type="function">
    <text evidence="1">Involved in protein export. Acts as a chaperone by maintaining the newly synthesized protein in an open conformation. Functions as a peptidyl-prolyl cis-trans isomerase.</text>
</comment>
<comment type="catalytic activity">
    <reaction evidence="1">
        <text>[protein]-peptidylproline (omega=180) = [protein]-peptidylproline (omega=0)</text>
        <dbReference type="Rhea" id="RHEA:16237"/>
        <dbReference type="Rhea" id="RHEA-COMP:10747"/>
        <dbReference type="Rhea" id="RHEA-COMP:10748"/>
        <dbReference type="ChEBI" id="CHEBI:83833"/>
        <dbReference type="ChEBI" id="CHEBI:83834"/>
        <dbReference type="EC" id="5.2.1.8"/>
    </reaction>
</comment>
<comment type="subcellular location">
    <subcellularLocation>
        <location>Cytoplasm</location>
    </subcellularLocation>
    <text evidence="1">About half TF is bound to the ribosome near the polypeptide exit tunnel while the other half is free in the cytoplasm.</text>
</comment>
<comment type="domain">
    <text evidence="1">Consists of 3 domains; the N-terminus binds the ribosome, the middle domain has PPIase activity, while the C-terminus has intrinsic chaperone activity on its own.</text>
</comment>
<comment type="similarity">
    <text evidence="1">Belongs to the FKBP-type PPIase family. Tig subfamily.</text>
</comment>
<organism>
    <name type="scientific">Psychrobacter arcticus (strain DSM 17307 / VKM B-2377 / 273-4)</name>
    <dbReference type="NCBI Taxonomy" id="259536"/>
    <lineage>
        <taxon>Bacteria</taxon>
        <taxon>Pseudomonadati</taxon>
        <taxon>Pseudomonadota</taxon>
        <taxon>Gammaproteobacteria</taxon>
        <taxon>Moraxellales</taxon>
        <taxon>Moraxellaceae</taxon>
        <taxon>Psychrobacter</taxon>
    </lineage>
</organism>
<protein>
    <recommendedName>
        <fullName evidence="1">Trigger factor</fullName>
        <shortName evidence="1">TF</shortName>
        <ecNumber evidence="1">5.2.1.8</ecNumber>
    </recommendedName>
    <alternativeName>
        <fullName evidence="1">PPIase</fullName>
    </alternativeName>
</protein>
<feature type="chain" id="PRO_0000256596" description="Trigger factor">
    <location>
        <begin position="1"/>
        <end position="447"/>
    </location>
</feature>
<feature type="domain" description="PPIase FKBP-type" evidence="1">
    <location>
        <begin position="164"/>
        <end position="249"/>
    </location>
</feature>
<keyword id="KW-0131">Cell cycle</keyword>
<keyword id="KW-0132">Cell division</keyword>
<keyword id="KW-0143">Chaperone</keyword>
<keyword id="KW-0963">Cytoplasm</keyword>
<keyword id="KW-0413">Isomerase</keyword>
<keyword id="KW-1185">Reference proteome</keyword>
<keyword id="KW-0697">Rotamase</keyword>
<dbReference type="EC" id="5.2.1.8" evidence="1"/>
<dbReference type="EMBL" id="CP000082">
    <property type="protein sequence ID" value="AAZ19788.1"/>
    <property type="molecule type" value="Genomic_DNA"/>
</dbReference>
<dbReference type="RefSeq" id="WP_011281197.1">
    <property type="nucleotide sequence ID" value="NC_007204.1"/>
</dbReference>
<dbReference type="SMR" id="Q4FQC0"/>
<dbReference type="STRING" id="259536.Psyc_1940"/>
<dbReference type="KEGG" id="par:Psyc_1940"/>
<dbReference type="eggNOG" id="COG0544">
    <property type="taxonomic scope" value="Bacteria"/>
</dbReference>
<dbReference type="HOGENOM" id="CLU_033058_2_0_6"/>
<dbReference type="OrthoDB" id="9767721at2"/>
<dbReference type="Proteomes" id="UP000000546">
    <property type="component" value="Chromosome"/>
</dbReference>
<dbReference type="GO" id="GO:0005737">
    <property type="term" value="C:cytoplasm"/>
    <property type="evidence" value="ECO:0007669"/>
    <property type="project" value="UniProtKB-SubCell"/>
</dbReference>
<dbReference type="GO" id="GO:0003755">
    <property type="term" value="F:peptidyl-prolyl cis-trans isomerase activity"/>
    <property type="evidence" value="ECO:0007669"/>
    <property type="project" value="UniProtKB-UniRule"/>
</dbReference>
<dbReference type="GO" id="GO:0044183">
    <property type="term" value="F:protein folding chaperone"/>
    <property type="evidence" value="ECO:0007669"/>
    <property type="project" value="TreeGrafter"/>
</dbReference>
<dbReference type="GO" id="GO:0043022">
    <property type="term" value="F:ribosome binding"/>
    <property type="evidence" value="ECO:0007669"/>
    <property type="project" value="TreeGrafter"/>
</dbReference>
<dbReference type="GO" id="GO:0051083">
    <property type="term" value="P:'de novo' cotranslational protein folding"/>
    <property type="evidence" value="ECO:0007669"/>
    <property type="project" value="TreeGrafter"/>
</dbReference>
<dbReference type="GO" id="GO:0051301">
    <property type="term" value="P:cell division"/>
    <property type="evidence" value="ECO:0007669"/>
    <property type="project" value="UniProtKB-KW"/>
</dbReference>
<dbReference type="GO" id="GO:0061077">
    <property type="term" value="P:chaperone-mediated protein folding"/>
    <property type="evidence" value="ECO:0007669"/>
    <property type="project" value="TreeGrafter"/>
</dbReference>
<dbReference type="GO" id="GO:0015031">
    <property type="term" value="P:protein transport"/>
    <property type="evidence" value="ECO:0007669"/>
    <property type="project" value="UniProtKB-UniRule"/>
</dbReference>
<dbReference type="GO" id="GO:0043335">
    <property type="term" value="P:protein unfolding"/>
    <property type="evidence" value="ECO:0007669"/>
    <property type="project" value="TreeGrafter"/>
</dbReference>
<dbReference type="FunFam" id="3.10.50.40:FF:000001">
    <property type="entry name" value="Trigger factor"/>
    <property type="match status" value="1"/>
</dbReference>
<dbReference type="Gene3D" id="3.10.50.40">
    <property type="match status" value="1"/>
</dbReference>
<dbReference type="Gene3D" id="3.30.70.1050">
    <property type="entry name" value="Trigger factor ribosome-binding domain"/>
    <property type="match status" value="1"/>
</dbReference>
<dbReference type="Gene3D" id="1.10.3120.10">
    <property type="entry name" value="Trigger factor, C-terminal domain"/>
    <property type="match status" value="1"/>
</dbReference>
<dbReference type="HAMAP" id="MF_00303">
    <property type="entry name" value="Trigger_factor_Tig"/>
    <property type="match status" value="1"/>
</dbReference>
<dbReference type="InterPro" id="IPR046357">
    <property type="entry name" value="PPIase_dom_sf"/>
</dbReference>
<dbReference type="InterPro" id="IPR001179">
    <property type="entry name" value="PPIase_FKBP_dom"/>
</dbReference>
<dbReference type="InterPro" id="IPR005215">
    <property type="entry name" value="Trig_fac"/>
</dbReference>
<dbReference type="InterPro" id="IPR008880">
    <property type="entry name" value="Trigger_fac_C"/>
</dbReference>
<dbReference type="InterPro" id="IPR037041">
    <property type="entry name" value="Trigger_fac_C_sf"/>
</dbReference>
<dbReference type="InterPro" id="IPR008881">
    <property type="entry name" value="Trigger_fac_ribosome-bd_bac"/>
</dbReference>
<dbReference type="InterPro" id="IPR036611">
    <property type="entry name" value="Trigger_fac_ribosome-bd_sf"/>
</dbReference>
<dbReference type="InterPro" id="IPR027304">
    <property type="entry name" value="Trigger_fact/SurA_dom_sf"/>
</dbReference>
<dbReference type="NCBIfam" id="TIGR00115">
    <property type="entry name" value="tig"/>
    <property type="match status" value="1"/>
</dbReference>
<dbReference type="PANTHER" id="PTHR30560">
    <property type="entry name" value="TRIGGER FACTOR CHAPERONE AND PEPTIDYL-PROLYL CIS/TRANS ISOMERASE"/>
    <property type="match status" value="1"/>
</dbReference>
<dbReference type="PANTHER" id="PTHR30560:SF3">
    <property type="entry name" value="TRIGGER FACTOR-LIKE PROTEIN TIG, CHLOROPLASTIC"/>
    <property type="match status" value="1"/>
</dbReference>
<dbReference type="Pfam" id="PF00254">
    <property type="entry name" value="FKBP_C"/>
    <property type="match status" value="1"/>
</dbReference>
<dbReference type="Pfam" id="PF05698">
    <property type="entry name" value="Trigger_C"/>
    <property type="match status" value="1"/>
</dbReference>
<dbReference type="Pfam" id="PF05697">
    <property type="entry name" value="Trigger_N"/>
    <property type="match status" value="1"/>
</dbReference>
<dbReference type="PIRSF" id="PIRSF003095">
    <property type="entry name" value="Trigger_factor"/>
    <property type="match status" value="1"/>
</dbReference>
<dbReference type="SUPFAM" id="SSF54534">
    <property type="entry name" value="FKBP-like"/>
    <property type="match status" value="1"/>
</dbReference>
<dbReference type="SUPFAM" id="SSF109998">
    <property type="entry name" value="Triger factor/SurA peptide-binding domain-like"/>
    <property type="match status" value="1"/>
</dbReference>
<dbReference type="SUPFAM" id="SSF102735">
    <property type="entry name" value="Trigger factor ribosome-binding domain"/>
    <property type="match status" value="1"/>
</dbReference>
<dbReference type="PROSITE" id="PS50059">
    <property type="entry name" value="FKBP_PPIASE"/>
    <property type="match status" value="1"/>
</dbReference>
<evidence type="ECO:0000255" key="1">
    <source>
        <dbReference type="HAMAP-Rule" id="MF_00303"/>
    </source>
</evidence>
<reference key="1">
    <citation type="journal article" date="2010" name="Appl. Environ. Microbiol.">
        <title>The genome sequence of Psychrobacter arcticus 273-4, a psychroactive Siberian permafrost bacterium, reveals mechanisms for adaptation to low-temperature growth.</title>
        <authorList>
            <person name="Ayala-del-Rio H.L."/>
            <person name="Chain P.S."/>
            <person name="Grzymski J.J."/>
            <person name="Ponder M.A."/>
            <person name="Ivanova N."/>
            <person name="Bergholz P.W."/>
            <person name="Di Bartolo G."/>
            <person name="Hauser L."/>
            <person name="Land M."/>
            <person name="Bakermans C."/>
            <person name="Rodrigues D."/>
            <person name="Klappenbach J."/>
            <person name="Zarka D."/>
            <person name="Larimer F."/>
            <person name="Richardson P."/>
            <person name="Murray A."/>
            <person name="Thomashow M."/>
            <person name="Tiedje J.M."/>
        </authorList>
    </citation>
    <scope>NUCLEOTIDE SEQUENCE [LARGE SCALE GENOMIC DNA]</scope>
    <source>
        <strain>DSM 17307 / VKM B-2377 / 273-4</strain>
    </source>
</reference>
<gene>
    <name evidence="1" type="primary">tig</name>
    <name type="ordered locus">Psyc_1940</name>
</gene>